<gene>
    <name evidence="1" type="primary">def</name>
    <name type="ordered locus">Teth39_1320</name>
</gene>
<feature type="chain" id="PRO_1000097353" description="Peptide deformylase">
    <location>
        <begin position="1"/>
        <end position="159"/>
    </location>
</feature>
<feature type="active site" evidence="1">
    <location>
        <position position="131"/>
    </location>
</feature>
<feature type="binding site" evidence="1">
    <location>
        <position position="88"/>
    </location>
    <ligand>
        <name>Fe cation</name>
        <dbReference type="ChEBI" id="CHEBI:24875"/>
    </ligand>
</feature>
<feature type="binding site" evidence="1">
    <location>
        <position position="130"/>
    </location>
    <ligand>
        <name>Fe cation</name>
        <dbReference type="ChEBI" id="CHEBI:24875"/>
    </ligand>
</feature>
<feature type="binding site" evidence="1">
    <location>
        <position position="134"/>
    </location>
    <ligand>
        <name>Fe cation</name>
        <dbReference type="ChEBI" id="CHEBI:24875"/>
    </ligand>
</feature>
<accession>B0KA11</accession>
<organism>
    <name type="scientific">Thermoanaerobacter pseudethanolicus (strain ATCC 33223 / 39E)</name>
    <name type="common">Clostridium thermohydrosulfuricum</name>
    <dbReference type="NCBI Taxonomy" id="340099"/>
    <lineage>
        <taxon>Bacteria</taxon>
        <taxon>Bacillati</taxon>
        <taxon>Bacillota</taxon>
        <taxon>Clostridia</taxon>
        <taxon>Thermoanaerobacterales</taxon>
        <taxon>Thermoanaerobacteraceae</taxon>
        <taxon>Thermoanaerobacter</taxon>
    </lineage>
</organism>
<dbReference type="EC" id="3.5.1.88" evidence="1"/>
<dbReference type="EMBL" id="CP000924">
    <property type="protein sequence ID" value="ABY94974.1"/>
    <property type="molecule type" value="Genomic_DNA"/>
</dbReference>
<dbReference type="RefSeq" id="WP_003868208.1">
    <property type="nucleotide sequence ID" value="NC_010321.1"/>
</dbReference>
<dbReference type="SMR" id="B0KA11"/>
<dbReference type="STRING" id="340099.Teth39_1320"/>
<dbReference type="KEGG" id="tpd:Teth39_1320"/>
<dbReference type="eggNOG" id="COG0242">
    <property type="taxonomic scope" value="Bacteria"/>
</dbReference>
<dbReference type="HOGENOM" id="CLU_061901_4_2_9"/>
<dbReference type="Proteomes" id="UP000002156">
    <property type="component" value="Chromosome"/>
</dbReference>
<dbReference type="GO" id="GO:0046872">
    <property type="term" value="F:metal ion binding"/>
    <property type="evidence" value="ECO:0007669"/>
    <property type="project" value="UniProtKB-KW"/>
</dbReference>
<dbReference type="GO" id="GO:0042586">
    <property type="term" value="F:peptide deformylase activity"/>
    <property type="evidence" value="ECO:0007669"/>
    <property type="project" value="UniProtKB-UniRule"/>
</dbReference>
<dbReference type="GO" id="GO:0043686">
    <property type="term" value="P:co-translational protein modification"/>
    <property type="evidence" value="ECO:0007669"/>
    <property type="project" value="TreeGrafter"/>
</dbReference>
<dbReference type="GO" id="GO:0006412">
    <property type="term" value="P:translation"/>
    <property type="evidence" value="ECO:0007669"/>
    <property type="project" value="UniProtKB-UniRule"/>
</dbReference>
<dbReference type="CDD" id="cd00487">
    <property type="entry name" value="Pep_deformylase"/>
    <property type="match status" value="1"/>
</dbReference>
<dbReference type="FunFam" id="3.90.45.10:FF:000005">
    <property type="entry name" value="Peptide deformylase"/>
    <property type="match status" value="1"/>
</dbReference>
<dbReference type="Gene3D" id="3.90.45.10">
    <property type="entry name" value="Peptide deformylase"/>
    <property type="match status" value="1"/>
</dbReference>
<dbReference type="HAMAP" id="MF_00163">
    <property type="entry name" value="Pep_deformylase"/>
    <property type="match status" value="1"/>
</dbReference>
<dbReference type="InterPro" id="IPR023635">
    <property type="entry name" value="Peptide_deformylase"/>
</dbReference>
<dbReference type="InterPro" id="IPR036821">
    <property type="entry name" value="Peptide_deformylase_sf"/>
</dbReference>
<dbReference type="NCBIfam" id="TIGR00079">
    <property type="entry name" value="pept_deformyl"/>
    <property type="match status" value="1"/>
</dbReference>
<dbReference type="NCBIfam" id="NF001159">
    <property type="entry name" value="PRK00150.1-3"/>
    <property type="match status" value="1"/>
</dbReference>
<dbReference type="PANTHER" id="PTHR10458">
    <property type="entry name" value="PEPTIDE DEFORMYLASE"/>
    <property type="match status" value="1"/>
</dbReference>
<dbReference type="PANTHER" id="PTHR10458:SF22">
    <property type="entry name" value="PEPTIDE DEFORMYLASE"/>
    <property type="match status" value="1"/>
</dbReference>
<dbReference type="Pfam" id="PF01327">
    <property type="entry name" value="Pep_deformylase"/>
    <property type="match status" value="1"/>
</dbReference>
<dbReference type="PIRSF" id="PIRSF004749">
    <property type="entry name" value="Pep_def"/>
    <property type="match status" value="1"/>
</dbReference>
<dbReference type="PRINTS" id="PR01576">
    <property type="entry name" value="PDEFORMYLASE"/>
</dbReference>
<dbReference type="SUPFAM" id="SSF56420">
    <property type="entry name" value="Peptide deformylase"/>
    <property type="match status" value="1"/>
</dbReference>
<proteinExistence type="inferred from homology"/>
<evidence type="ECO:0000255" key="1">
    <source>
        <dbReference type="HAMAP-Rule" id="MF_00163"/>
    </source>
</evidence>
<keyword id="KW-0378">Hydrolase</keyword>
<keyword id="KW-0408">Iron</keyword>
<keyword id="KW-0479">Metal-binding</keyword>
<keyword id="KW-0648">Protein biosynthesis</keyword>
<keyword id="KW-1185">Reference proteome</keyword>
<comment type="function">
    <text evidence="1">Removes the formyl group from the N-terminal Met of newly synthesized proteins. Requires at least a dipeptide for an efficient rate of reaction. N-terminal L-methionine is a prerequisite for activity but the enzyme has broad specificity at other positions.</text>
</comment>
<comment type="catalytic activity">
    <reaction evidence="1">
        <text>N-terminal N-formyl-L-methionyl-[peptide] + H2O = N-terminal L-methionyl-[peptide] + formate</text>
        <dbReference type="Rhea" id="RHEA:24420"/>
        <dbReference type="Rhea" id="RHEA-COMP:10639"/>
        <dbReference type="Rhea" id="RHEA-COMP:10640"/>
        <dbReference type="ChEBI" id="CHEBI:15377"/>
        <dbReference type="ChEBI" id="CHEBI:15740"/>
        <dbReference type="ChEBI" id="CHEBI:49298"/>
        <dbReference type="ChEBI" id="CHEBI:64731"/>
        <dbReference type="EC" id="3.5.1.88"/>
    </reaction>
</comment>
<comment type="cofactor">
    <cofactor evidence="1">
        <name>Fe(2+)</name>
        <dbReference type="ChEBI" id="CHEBI:29033"/>
    </cofactor>
    <text evidence="1">Binds 1 Fe(2+) ion.</text>
</comment>
<comment type="similarity">
    <text evidence="1">Belongs to the polypeptide deformylase family.</text>
</comment>
<sequence length="159" mass="17874">MAIRYVRKIGDEVLRKKAKPVTEINSHILTILEDMAQTMYLNDGVGLAANQIGVLRRLVVIDVGEGLLELINPEIVYEEGEQVGAEGCLSIPGVVGEVKRPKKVKVKYLDREGKEREIEGEDLLARALCHEIDHLNGVLFIDKAIRFLDEEEKEQVKEV</sequence>
<protein>
    <recommendedName>
        <fullName evidence="1">Peptide deformylase</fullName>
        <shortName evidence="1">PDF</shortName>
        <ecNumber evidence="1">3.5.1.88</ecNumber>
    </recommendedName>
    <alternativeName>
        <fullName evidence="1">Polypeptide deformylase</fullName>
    </alternativeName>
</protein>
<reference key="1">
    <citation type="submission" date="2008-01" db="EMBL/GenBank/DDBJ databases">
        <title>Complete sequence of Thermoanaerobacter pseudethanolicus 39E.</title>
        <authorList>
            <person name="Copeland A."/>
            <person name="Lucas S."/>
            <person name="Lapidus A."/>
            <person name="Barry K."/>
            <person name="Glavina del Rio T."/>
            <person name="Dalin E."/>
            <person name="Tice H."/>
            <person name="Pitluck S."/>
            <person name="Bruce D."/>
            <person name="Goodwin L."/>
            <person name="Saunders E."/>
            <person name="Brettin T."/>
            <person name="Detter J.C."/>
            <person name="Han C."/>
            <person name="Schmutz J."/>
            <person name="Larimer F."/>
            <person name="Land M."/>
            <person name="Hauser L."/>
            <person name="Kyrpides N."/>
            <person name="Lykidis A."/>
            <person name="Hemme C."/>
            <person name="Fields M.W."/>
            <person name="He Z."/>
            <person name="Zhou J."/>
            <person name="Richardson P."/>
        </authorList>
    </citation>
    <scope>NUCLEOTIDE SEQUENCE [LARGE SCALE GENOMIC DNA]</scope>
    <source>
        <strain>ATCC 33223 / DSM 2355 / 39E</strain>
    </source>
</reference>
<name>DEF_THEP3</name>